<proteinExistence type="inferred from homology"/>
<reference key="1">
    <citation type="journal article" date="2011" name="PLoS ONE">
        <title>The genome of Akkermansia muciniphila, a dedicated intestinal mucin degrader, and its use in exploring intestinal metagenomes.</title>
        <authorList>
            <person name="van Passel M.W."/>
            <person name="Kant R."/>
            <person name="Zoetendal E.G."/>
            <person name="Plugge C.M."/>
            <person name="Derrien M."/>
            <person name="Malfatti S.A."/>
            <person name="Chain P.S."/>
            <person name="Woyke T."/>
            <person name="Palva A."/>
            <person name="de Vos W.M."/>
            <person name="Smidt H."/>
        </authorList>
    </citation>
    <scope>NUCLEOTIDE SEQUENCE [LARGE SCALE GENOMIC DNA]</scope>
    <source>
        <strain>ATCC BAA-835 / DSM 22959 / JCM 33894 / BCRC 81048 / CCUG 64013 / CIP 107961 / Muc</strain>
    </source>
</reference>
<protein>
    <recommendedName>
        <fullName evidence="1">UDP-N-acetylglucosamine 1-carboxyvinyltransferase</fullName>
        <ecNumber evidence="1">2.5.1.7</ecNumber>
    </recommendedName>
    <alternativeName>
        <fullName evidence="1">Enoylpyruvate transferase</fullName>
    </alternativeName>
    <alternativeName>
        <fullName evidence="1">UDP-N-acetylglucosamine enolpyruvyl transferase</fullName>
        <shortName evidence="1">EPT</shortName>
    </alternativeName>
</protein>
<evidence type="ECO:0000255" key="1">
    <source>
        <dbReference type="HAMAP-Rule" id="MF_00111"/>
    </source>
</evidence>
<accession>B2UNJ3</accession>
<dbReference type="EC" id="2.5.1.7" evidence="1"/>
<dbReference type="EMBL" id="CP001071">
    <property type="protein sequence ID" value="ACD05709.1"/>
    <property type="molecule type" value="Genomic_DNA"/>
</dbReference>
<dbReference type="RefSeq" id="WP_012420923.1">
    <property type="nucleotide sequence ID" value="NZ_CP071807.1"/>
</dbReference>
<dbReference type="SMR" id="B2UNJ3"/>
<dbReference type="STRING" id="349741.Amuc_1895"/>
<dbReference type="PaxDb" id="349741-Amuc_1895"/>
<dbReference type="GeneID" id="60881482"/>
<dbReference type="KEGG" id="amu:Amuc_1895"/>
<dbReference type="eggNOG" id="COG0766">
    <property type="taxonomic scope" value="Bacteria"/>
</dbReference>
<dbReference type="HOGENOM" id="CLU_027387_0_0_0"/>
<dbReference type="OrthoDB" id="9803760at2"/>
<dbReference type="BioCyc" id="AMUC349741:G1GBX-2021-MONOMER"/>
<dbReference type="UniPathway" id="UPA00219"/>
<dbReference type="Proteomes" id="UP000001031">
    <property type="component" value="Chromosome"/>
</dbReference>
<dbReference type="GO" id="GO:0005737">
    <property type="term" value="C:cytoplasm"/>
    <property type="evidence" value="ECO:0007669"/>
    <property type="project" value="UniProtKB-SubCell"/>
</dbReference>
<dbReference type="GO" id="GO:0008760">
    <property type="term" value="F:UDP-N-acetylglucosamine 1-carboxyvinyltransferase activity"/>
    <property type="evidence" value="ECO:0007669"/>
    <property type="project" value="UniProtKB-UniRule"/>
</dbReference>
<dbReference type="GO" id="GO:0051301">
    <property type="term" value="P:cell division"/>
    <property type="evidence" value="ECO:0007669"/>
    <property type="project" value="UniProtKB-KW"/>
</dbReference>
<dbReference type="GO" id="GO:0071555">
    <property type="term" value="P:cell wall organization"/>
    <property type="evidence" value="ECO:0007669"/>
    <property type="project" value="UniProtKB-KW"/>
</dbReference>
<dbReference type="GO" id="GO:0009252">
    <property type="term" value="P:peptidoglycan biosynthetic process"/>
    <property type="evidence" value="ECO:0007669"/>
    <property type="project" value="UniProtKB-UniRule"/>
</dbReference>
<dbReference type="GO" id="GO:0008360">
    <property type="term" value="P:regulation of cell shape"/>
    <property type="evidence" value="ECO:0007669"/>
    <property type="project" value="UniProtKB-KW"/>
</dbReference>
<dbReference type="GO" id="GO:0019277">
    <property type="term" value="P:UDP-N-acetylgalactosamine biosynthetic process"/>
    <property type="evidence" value="ECO:0007669"/>
    <property type="project" value="InterPro"/>
</dbReference>
<dbReference type="CDD" id="cd01555">
    <property type="entry name" value="UdpNAET"/>
    <property type="match status" value="1"/>
</dbReference>
<dbReference type="Gene3D" id="3.65.10.10">
    <property type="entry name" value="Enolpyruvate transferase domain"/>
    <property type="match status" value="2"/>
</dbReference>
<dbReference type="HAMAP" id="MF_00111">
    <property type="entry name" value="MurA"/>
    <property type="match status" value="1"/>
</dbReference>
<dbReference type="InterPro" id="IPR001986">
    <property type="entry name" value="Enolpyruvate_Tfrase_dom"/>
</dbReference>
<dbReference type="InterPro" id="IPR036968">
    <property type="entry name" value="Enolpyruvate_Tfrase_sf"/>
</dbReference>
<dbReference type="InterPro" id="IPR050068">
    <property type="entry name" value="MurA_subfamily"/>
</dbReference>
<dbReference type="InterPro" id="IPR013792">
    <property type="entry name" value="RNA3'P_cycl/enolpyr_Trfase_a/b"/>
</dbReference>
<dbReference type="InterPro" id="IPR005750">
    <property type="entry name" value="UDP_GlcNAc_COvinyl_MurA"/>
</dbReference>
<dbReference type="NCBIfam" id="TIGR01072">
    <property type="entry name" value="murA"/>
    <property type="match status" value="1"/>
</dbReference>
<dbReference type="NCBIfam" id="NF006873">
    <property type="entry name" value="PRK09369.1"/>
    <property type="match status" value="1"/>
</dbReference>
<dbReference type="PANTHER" id="PTHR43783">
    <property type="entry name" value="UDP-N-ACETYLGLUCOSAMINE 1-CARBOXYVINYLTRANSFERASE"/>
    <property type="match status" value="1"/>
</dbReference>
<dbReference type="PANTHER" id="PTHR43783:SF1">
    <property type="entry name" value="UDP-N-ACETYLGLUCOSAMINE 1-CARBOXYVINYLTRANSFERASE"/>
    <property type="match status" value="1"/>
</dbReference>
<dbReference type="Pfam" id="PF00275">
    <property type="entry name" value="EPSP_synthase"/>
    <property type="match status" value="1"/>
</dbReference>
<dbReference type="SUPFAM" id="SSF55205">
    <property type="entry name" value="EPT/RTPC-like"/>
    <property type="match status" value="1"/>
</dbReference>
<organism>
    <name type="scientific">Akkermansia muciniphila (strain ATCC BAA-835 / DSM 22959 / JCM 33894 / BCRC 81048 / CCUG 64013 / CIP 107961 / Muc)</name>
    <dbReference type="NCBI Taxonomy" id="349741"/>
    <lineage>
        <taxon>Bacteria</taxon>
        <taxon>Pseudomonadati</taxon>
        <taxon>Verrucomicrobiota</taxon>
        <taxon>Verrucomicrobiia</taxon>
        <taxon>Verrucomicrobiales</taxon>
        <taxon>Akkermansiaceae</taxon>
        <taxon>Akkermansia</taxon>
    </lineage>
</organism>
<name>MURA_AKKM8</name>
<feature type="chain" id="PRO_1000094668" description="UDP-N-acetylglucosamine 1-carboxyvinyltransferase">
    <location>
        <begin position="1"/>
        <end position="425"/>
    </location>
</feature>
<feature type="active site" description="Proton donor" evidence="1">
    <location>
        <position position="115"/>
    </location>
</feature>
<feature type="binding site" evidence="1">
    <location>
        <begin position="22"/>
        <end position="23"/>
    </location>
    <ligand>
        <name>phosphoenolpyruvate</name>
        <dbReference type="ChEBI" id="CHEBI:58702"/>
    </ligand>
</feature>
<feature type="binding site" evidence="1">
    <location>
        <position position="91"/>
    </location>
    <ligand>
        <name>UDP-N-acetyl-alpha-D-glucosamine</name>
        <dbReference type="ChEBI" id="CHEBI:57705"/>
    </ligand>
</feature>
<feature type="binding site" evidence="1">
    <location>
        <begin position="120"/>
        <end position="124"/>
    </location>
    <ligand>
        <name>UDP-N-acetyl-alpha-D-glucosamine</name>
        <dbReference type="ChEBI" id="CHEBI:57705"/>
    </ligand>
</feature>
<feature type="binding site" evidence="1">
    <location>
        <position position="309"/>
    </location>
    <ligand>
        <name>UDP-N-acetyl-alpha-D-glucosamine</name>
        <dbReference type="ChEBI" id="CHEBI:57705"/>
    </ligand>
</feature>
<feature type="binding site" evidence="1">
    <location>
        <position position="331"/>
    </location>
    <ligand>
        <name>UDP-N-acetyl-alpha-D-glucosamine</name>
        <dbReference type="ChEBI" id="CHEBI:57705"/>
    </ligand>
</feature>
<feature type="modified residue" description="2-(S-cysteinyl)pyruvic acid O-phosphothioketal" evidence="1">
    <location>
        <position position="115"/>
    </location>
</feature>
<keyword id="KW-0131">Cell cycle</keyword>
<keyword id="KW-0132">Cell division</keyword>
<keyword id="KW-0133">Cell shape</keyword>
<keyword id="KW-0961">Cell wall biogenesis/degradation</keyword>
<keyword id="KW-0963">Cytoplasm</keyword>
<keyword id="KW-0573">Peptidoglycan synthesis</keyword>
<keyword id="KW-0670">Pyruvate</keyword>
<keyword id="KW-1185">Reference proteome</keyword>
<keyword id="KW-0808">Transferase</keyword>
<gene>
    <name evidence="1" type="primary">murA</name>
    <name type="ordered locus">Amuc_1895</name>
</gene>
<sequence length="425" mass="45409">MEKLVVHGGFTLRGAVNISGSKNASLPILAASLLTDEPVVVRRVPDVSDTNFMVQIMGQLGASVERSSGNVRVEARNLHSEAAYEQVRKMRASICLMGPLMARMQRCVIPLPGGCVIGDRPVDLHIRAIQALGAQVQIERGNLIIEAPRGLKGATVDLSGDHGPTVLGTDNLMMAAVLAEGTTVIESAASEPEVVDLANFLTKMGANIQGAGTRRIVIEGVEKLRGCNHTVIPDRIEAGTFMVAAAMMGDGVTLRRVCEEHMTVVTDLLRKCGHHVEFNERGDTVTIIAGKTPKCGEIKTAPYPGYPTDMQAQMTALFATTPGISVVKDTIFPQRFMHCSELKRMGADIKVDNGTAVISGVETLSGAPVMASDLRASAALVLAALKAEGTTEIHRLYHIDRGYEMIDEKLLAIGAAVERLPDDDN</sequence>
<comment type="function">
    <text evidence="1">Cell wall formation. Adds enolpyruvyl to UDP-N-acetylglucosamine.</text>
</comment>
<comment type="catalytic activity">
    <reaction evidence="1">
        <text>phosphoenolpyruvate + UDP-N-acetyl-alpha-D-glucosamine = UDP-N-acetyl-3-O-(1-carboxyvinyl)-alpha-D-glucosamine + phosphate</text>
        <dbReference type="Rhea" id="RHEA:18681"/>
        <dbReference type="ChEBI" id="CHEBI:43474"/>
        <dbReference type="ChEBI" id="CHEBI:57705"/>
        <dbReference type="ChEBI" id="CHEBI:58702"/>
        <dbReference type="ChEBI" id="CHEBI:68483"/>
        <dbReference type="EC" id="2.5.1.7"/>
    </reaction>
</comment>
<comment type="pathway">
    <text evidence="1">Cell wall biogenesis; peptidoglycan biosynthesis.</text>
</comment>
<comment type="subcellular location">
    <subcellularLocation>
        <location evidence="1">Cytoplasm</location>
    </subcellularLocation>
</comment>
<comment type="similarity">
    <text evidence="1">Belongs to the EPSP synthase family. MurA subfamily.</text>
</comment>